<dbReference type="EMBL" id="U18997">
    <property type="protein sequence ID" value="AAA57991.1"/>
    <property type="status" value="ALT_INIT"/>
    <property type="molecule type" value="Genomic_DNA"/>
</dbReference>
<dbReference type="EMBL" id="U00096">
    <property type="protein sequence ID" value="AAC76222.2"/>
    <property type="molecule type" value="Genomic_DNA"/>
</dbReference>
<dbReference type="EMBL" id="AP009048">
    <property type="protein sequence ID" value="BAE77234.1"/>
    <property type="molecule type" value="Genomic_DNA"/>
</dbReference>
<dbReference type="RefSeq" id="NP_417657.2">
    <property type="nucleotide sequence ID" value="NC_000913.3"/>
</dbReference>
<dbReference type="RefSeq" id="WP_000429656.1">
    <property type="nucleotide sequence ID" value="NZ_STEB01000012.1"/>
</dbReference>
<dbReference type="PDB" id="1NY8">
    <property type="method" value="NMR"/>
    <property type="chains" value="A=1-84"/>
</dbReference>
<dbReference type="PDBsum" id="1NY8"/>
<dbReference type="BMRB" id="P0A9W6"/>
<dbReference type="SMR" id="P0A9W6"/>
<dbReference type="BioGRID" id="4261275">
    <property type="interactions" value="40"/>
</dbReference>
<dbReference type="ComplexPortal" id="CPX-5899">
    <property type="entry name" value="ibaG-grxD iron-sulfur cluster assembly complex"/>
</dbReference>
<dbReference type="DIP" id="DIP-48231N"/>
<dbReference type="FunCoup" id="P0A9W6">
    <property type="interactions" value="43"/>
</dbReference>
<dbReference type="IntAct" id="P0A9W6">
    <property type="interactions" value="4"/>
</dbReference>
<dbReference type="STRING" id="511145.b3190"/>
<dbReference type="jPOST" id="P0A9W6"/>
<dbReference type="PaxDb" id="511145-b3190"/>
<dbReference type="EnsemblBacteria" id="AAC76222">
    <property type="protein sequence ID" value="AAC76222"/>
    <property type="gene ID" value="b3190"/>
</dbReference>
<dbReference type="GeneID" id="93778791"/>
<dbReference type="GeneID" id="947958"/>
<dbReference type="KEGG" id="ecj:JW3157"/>
<dbReference type="KEGG" id="eco:b3190"/>
<dbReference type="KEGG" id="ecoc:C3026_17365"/>
<dbReference type="PATRIC" id="fig|511145.12.peg.3284"/>
<dbReference type="EchoBASE" id="EB2648"/>
<dbReference type="eggNOG" id="COG5007">
    <property type="taxonomic scope" value="Bacteria"/>
</dbReference>
<dbReference type="HOGENOM" id="CLU_109462_4_1_6"/>
<dbReference type="InParanoid" id="P0A9W6"/>
<dbReference type="OMA" id="QIYAHLN"/>
<dbReference type="OrthoDB" id="9812890at2"/>
<dbReference type="PhylomeDB" id="P0A9W6"/>
<dbReference type="BioCyc" id="EcoCyc:G7657-MONOMER"/>
<dbReference type="EvolutionaryTrace" id="P0A9W6"/>
<dbReference type="PRO" id="PR:P0A9W6"/>
<dbReference type="Proteomes" id="UP000000625">
    <property type="component" value="Chromosome"/>
</dbReference>
<dbReference type="GO" id="GO:0005829">
    <property type="term" value="C:cytosol"/>
    <property type="evidence" value="ECO:0000314"/>
    <property type="project" value="EcoCyc"/>
</dbReference>
<dbReference type="GO" id="GO:1990229">
    <property type="term" value="C:iron-sulfur cluster assembly complex"/>
    <property type="evidence" value="ECO:0000353"/>
    <property type="project" value="ComplexPortal"/>
</dbReference>
<dbReference type="GO" id="GO:0051537">
    <property type="term" value="F:2 iron, 2 sulfur cluster binding"/>
    <property type="evidence" value="ECO:0000314"/>
    <property type="project" value="EcoCyc"/>
</dbReference>
<dbReference type="GO" id="GO:0045454">
    <property type="term" value="P:cell redox homeostasis"/>
    <property type="evidence" value="ECO:0000303"/>
    <property type="project" value="ComplexPortal"/>
</dbReference>
<dbReference type="GO" id="GO:0097533">
    <property type="term" value="P:cellular stress response to acid chemical"/>
    <property type="evidence" value="ECO:0000270"/>
    <property type="project" value="EcoCyc"/>
</dbReference>
<dbReference type="GO" id="GO:0006879">
    <property type="term" value="P:intracellular iron ion homeostasis"/>
    <property type="evidence" value="ECO:0000303"/>
    <property type="project" value="ComplexPortal"/>
</dbReference>
<dbReference type="GO" id="GO:0016226">
    <property type="term" value="P:iron-sulfur cluster assembly"/>
    <property type="evidence" value="ECO:0000303"/>
    <property type="project" value="ComplexPortal"/>
</dbReference>
<dbReference type="FunFam" id="3.30.300.90:FF:000002">
    <property type="entry name" value="Acid stress protein IbaG"/>
    <property type="match status" value="1"/>
</dbReference>
<dbReference type="Gene3D" id="3.30.300.90">
    <property type="entry name" value="BolA-like"/>
    <property type="match status" value="1"/>
</dbReference>
<dbReference type="InterPro" id="IPR002634">
    <property type="entry name" value="BolA"/>
</dbReference>
<dbReference type="InterPro" id="IPR036065">
    <property type="entry name" value="BolA-like_sf"/>
</dbReference>
<dbReference type="InterPro" id="IPR050961">
    <property type="entry name" value="BolA/IbaG_stress_morph_reg"/>
</dbReference>
<dbReference type="PANTHER" id="PTHR46229:SF4">
    <property type="entry name" value="ACID STRESS PROTEIN IBAG"/>
    <property type="match status" value="1"/>
</dbReference>
<dbReference type="PANTHER" id="PTHR46229">
    <property type="entry name" value="BOLA TRANSCRIPTION REGULATOR"/>
    <property type="match status" value="1"/>
</dbReference>
<dbReference type="Pfam" id="PF01722">
    <property type="entry name" value="BolA"/>
    <property type="match status" value="1"/>
</dbReference>
<dbReference type="PIRSF" id="PIRSF003113">
    <property type="entry name" value="BolA"/>
    <property type="match status" value="1"/>
</dbReference>
<dbReference type="SUPFAM" id="SSF82657">
    <property type="entry name" value="BolA-like"/>
    <property type="match status" value="1"/>
</dbReference>
<protein>
    <recommendedName>
        <fullName evidence="3">Acid stress protein IbaG</fullName>
    </recommendedName>
</protein>
<organism>
    <name type="scientific">Escherichia coli (strain K12)</name>
    <dbReference type="NCBI Taxonomy" id="83333"/>
    <lineage>
        <taxon>Bacteria</taxon>
        <taxon>Pseudomonadati</taxon>
        <taxon>Pseudomonadota</taxon>
        <taxon>Gammaproteobacteria</taxon>
        <taxon>Enterobacterales</taxon>
        <taxon>Enterobacteriaceae</taxon>
        <taxon>Escherichia</taxon>
    </lineage>
</organism>
<name>IBAG_ECOLI</name>
<gene>
    <name evidence="2" type="primary">ibaG</name>
    <name type="synonym">yrbA</name>
    <name type="ordered locus">b3190</name>
    <name type="ordered locus">JW3157</name>
</gene>
<comment type="function">
    <text evidence="1">Involved in cell resistance against acid stress.</text>
</comment>
<comment type="interaction">
    <interactant intactId="EBI-1131877">
        <id>P0A9W6</id>
    </interactant>
    <interactant intactId="EBI-545828">
        <id>P0AC69</id>
        <label>grxD</label>
    </interactant>
    <organismsDiffer>false</organismsDiffer>
    <experiments>4</experiments>
</comment>
<comment type="induction">
    <text evidence="1">Induced by acidic stress during exponential phase.</text>
</comment>
<comment type="disruption phenotype">
    <text evidence="1">Deletion mutants grow faster and have higher viabilities in rich media, but have lower viabilities than the wild type in the late stationary phase.</text>
</comment>
<comment type="similarity">
    <text evidence="3">Belongs to the BolA/IbaG family.</text>
</comment>
<comment type="sequence caution" evidence="3">
    <conflict type="erroneous initiation">
        <sequence resource="EMBL-CDS" id="AAA57991"/>
    </conflict>
    <text>Extended N-terminus.</text>
</comment>
<feature type="chain" id="PRO_0000201218" description="Acid stress protein IbaG">
    <location>
        <begin position="1"/>
        <end position="84"/>
    </location>
</feature>
<feature type="helix" evidence="4">
    <location>
        <begin position="4"/>
        <end position="14"/>
    </location>
</feature>
<feature type="strand" evidence="4">
    <location>
        <begin position="17"/>
        <end position="35"/>
    </location>
</feature>
<feature type="strand" evidence="4">
    <location>
        <begin position="38"/>
        <end position="40"/>
    </location>
</feature>
<feature type="helix" evidence="4">
    <location>
        <begin position="42"/>
        <end position="50"/>
    </location>
</feature>
<feature type="turn" evidence="4">
    <location>
        <begin position="51"/>
        <end position="53"/>
    </location>
</feature>
<feature type="helix" evidence="4">
    <location>
        <begin position="54"/>
        <end position="60"/>
    </location>
</feature>
<feature type="strand" evidence="4">
    <location>
        <begin position="63"/>
        <end position="69"/>
    </location>
</feature>
<feature type="helix" evidence="4">
    <location>
        <begin position="72"/>
        <end position="80"/>
    </location>
</feature>
<sequence length="84" mass="9452">MENNEIQSVLMNALSLQEVHVSGDGSHFQVIAVGELFDGMSRVKKQQTVYGPLMEYIADNRIHAVSIKAYTPAEWARDRKLNGF</sequence>
<proteinExistence type="evidence at protein level"/>
<keyword id="KW-0002">3D-structure</keyword>
<keyword id="KW-1185">Reference proteome</keyword>
<keyword id="KW-0346">Stress response</keyword>
<reference key="1">
    <citation type="journal article" date="1997" name="Science">
        <title>The complete genome sequence of Escherichia coli K-12.</title>
        <authorList>
            <person name="Blattner F.R."/>
            <person name="Plunkett G. III"/>
            <person name="Bloch C.A."/>
            <person name="Perna N.T."/>
            <person name="Burland V."/>
            <person name="Riley M."/>
            <person name="Collado-Vides J."/>
            <person name="Glasner J.D."/>
            <person name="Rode C.K."/>
            <person name="Mayhew G.F."/>
            <person name="Gregor J."/>
            <person name="Davis N.W."/>
            <person name="Kirkpatrick H.A."/>
            <person name="Goeden M.A."/>
            <person name="Rose D.J."/>
            <person name="Mau B."/>
            <person name="Shao Y."/>
        </authorList>
    </citation>
    <scope>NUCLEOTIDE SEQUENCE [LARGE SCALE GENOMIC DNA]</scope>
    <source>
        <strain>K12 / MG1655 / ATCC 47076</strain>
    </source>
</reference>
<reference key="2">
    <citation type="journal article" date="2006" name="Mol. Syst. Biol.">
        <title>Highly accurate genome sequences of Escherichia coli K-12 strains MG1655 and W3110.</title>
        <authorList>
            <person name="Hayashi K."/>
            <person name="Morooka N."/>
            <person name="Yamamoto Y."/>
            <person name="Fujita K."/>
            <person name="Isono K."/>
            <person name="Choi S."/>
            <person name="Ohtsubo E."/>
            <person name="Baba T."/>
            <person name="Wanner B.L."/>
            <person name="Mori H."/>
            <person name="Horiuchi T."/>
        </authorList>
    </citation>
    <scope>NUCLEOTIDE SEQUENCE [LARGE SCALE GENOMIC DNA]</scope>
    <source>
        <strain>K12 / W3110 / ATCC 27325 / DSM 5911</strain>
    </source>
</reference>
<reference key="3">
    <citation type="journal article" date="1999" name="Electrophoresis">
        <title>Enrichment of low abundance proteins of Escherichia coli by hydroxyapatite chromatography.</title>
        <authorList>
            <person name="Fountoulakis M."/>
            <person name="Takacs M.-F."/>
            <person name="Berndt P."/>
            <person name="Langen H."/>
            <person name="Takacs B."/>
        </authorList>
    </citation>
    <scope>IDENTIFICATION BY MASS SPECTROMETRY</scope>
    <source>
        <strain>B / BL21</strain>
    </source>
</reference>
<reference key="4">
    <citation type="journal article" date="2012" name="J. Microbiol. Biotechnol.">
        <title>Characterization of the BolA homolog IbaG: a new gene involved in acid resistance.</title>
        <authorList>
            <person name="Guinote I.B."/>
            <person name="Moreira R.N."/>
            <person name="Freire P."/>
            <person name="Arraiano C.M."/>
        </authorList>
    </citation>
    <scope>FUNCTION</scope>
    <scope>INDUCTION</scope>
    <scope>DISRUPTION PHENOTYPE</scope>
    <source>
        <strain>MG1693</strain>
    </source>
</reference>
<reference key="5">
    <citation type="submission" date="2003-02" db="PDB data bank">
        <title>Solution structure of protein yrbA from Escherichia coli.</title>
        <authorList>
            <consortium name="Northeast structural genomics consortium (NESG)"/>
        </authorList>
    </citation>
    <scope>STRUCTURE BY NMR OF 1-84</scope>
</reference>
<accession>P0A9W6</accession>
<accession>P43781</accession>
<accession>P76672</accession>
<accession>Q2M922</accession>
<evidence type="ECO:0000269" key="1">
    <source>
    </source>
</evidence>
<evidence type="ECO:0000303" key="2">
    <source>
    </source>
</evidence>
<evidence type="ECO:0000305" key="3"/>
<evidence type="ECO:0007829" key="4">
    <source>
        <dbReference type="PDB" id="1NY8"/>
    </source>
</evidence>